<keyword id="KW-0002">3D-structure</keyword>
<keyword id="KW-0967">Endosome</keyword>
<keyword id="KW-0378">Hydrolase</keyword>
<keyword id="KW-0443">Lipid metabolism</keyword>
<keyword id="KW-0458">Lysosome</keyword>
<keyword id="KW-0472">Membrane</keyword>
<keyword id="KW-0496">Mitochondrion</keyword>
<keyword id="KW-1267">Proteomics identification</keyword>
<keyword id="KW-1185">Reference proteome</keyword>
<keyword id="KW-0735">Signal-anchor</keyword>
<keyword id="KW-0812">Transmembrane</keyword>
<keyword id="KW-1133">Transmembrane helix</keyword>
<proteinExistence type="evidence at protein level"/>
<name>ABHD6_HUMAN</name>
<protein>
    <recommendedName>
        <fullName evidence="7">Monoacylglycerol lipase ABHD6</fullName>
        <ecNumber evidence="4">3.1.1.23</ecNumber>
    </recommendedName>
    <alternativeName>
        <fullName evidence="1">2-arachidonoylglycerol hydrolase</fullName>
    </alternativeName>
    <alternativeName>
        <fullName evidence="9">Abhydrolase domain-containing protein 6</fullName>
    </alternativeName>
</protein>
<dbReference type="EC" id="3.1.1.23" evidence="4"/>
<dbReference type="EMBL" id="AK122983">
    <property type="protein sequence ID" value="BAG53832.1"/>
    <property type="molecule type" value="mRNA"/>
</dbReference>
<dbReference type="EMBL" id="AK172797">
    <property type="protein sequence ID" value="BAD18771.1"/>
    <property type="molecule type" value="mRNA"/>
</dbReference>
<dbReference type="EMBL" id="AK313168">
    <property type="protein sequence ID" value="BAG35986.1"/>
    <property type="molecule type" value="mRNA"/>
</dbReference>
<dbReference type="EMBL" id="AC098479">
    <property type="status" value="NOT_ANNOTATED_CDS"/>
    <property type="molecule type" value="Genomic_DNA"/>
</dbReference>
<dbReference type="EMBL" id="AC137936">
    <property type="status" value="NOT_ANNOTATED_CDS"/>
    <property type="molecule type" value="Genomic_DNA"/>
</dbReference>
<dbReference type="EMBL" id="CH471055">
    <property type="protein sequence ID" value="EAW65360.1"/>
    <property type="molecule type" value="Genomic_DNA"/>
</dbReference>
<dbReference type="EMBL" id="BC001698">
    <property type="protein sequence ID" value="AAH01698.1"/>
    <property type="molecule type" value="mRNA"/>
</dbReference>
<dbReference type="CCDS" id="CCDS2887.1"/>
<dbReference type="RefSeq" id="NP_001307055.1">
    <property type="nucleotide sequence ID" value="NM_001320126.2"/>
</dbReference>
<dbReference type="RefSeq" id="NP_065727.4">
    <property type="nucleotide sequence ID" value="NM_020676.6"/>
</dbReference>
<dbReference type="RefSeq" id="XP_047304586.1">
    <property type="nucleotide sequence ID" value="XM_047448630.1"/>
</dbReference>
<dbReference type="RefSeq" id="XP_054203346.1">
    <property type="nucleotide sequence ID" value="XM_054347371.1"/>
</dbReference>
<dbReference type="PDB" id="7OTS">
    <property type="method" value="X-ray"/>
    <property type="resolution" value="1.79 A"/>
    <property type="chains" value="A/B=43-337"/>
</dbReference>
<dbReference type="PDBsum" id="7OTS"/>
<dbReference type="SMR" id="Q9BV23"/>
<dbReference type="BioGRID" id="121508">
    <property type="interactions" value="32"/>
</dbReference>
<dbReference type="FunCoup" id="Q9BV23">
    <property type="interactions" value="323"/>
</dbReference>
<dbReference type="IntAct" id="Q9BV23">
    <property type="interactions" value="21"/>
</dbReference>
<dbReference type="STRING" id="9606.ENSP00000295962"/>
<dbReference type="BindingDB" id="Q9BV23"/>
<dbReference type="ChEMBL" id="CHEMBL2189127"/>
<dbReference type="DrugCentral" id="Q9BV23"/>
<dbReference type="GuidetoPHARMACOLOGY" id="2919"/>
<dbReference type="SwissLipids" id="SLP:000001042"/>
<dbReference type="ESTHER" id="human-ABHD6">
    <property type="family name" value="ABHD6-Lip"/>
</dbReference>
<dbReference type="MEROPS" id="S33.997"/>
<dbReference type="iPTMnet" id="Q9BV23"/>
<dbReference type="MetOSite" id="Q9BV23"/>
<dbReference type="PhosphoSitePlus" id="Q9BV23"/>
<dbReference type="SwissPalm" id="Q9BV23"/>
<dbReference type="BioMuta" id="ABHD6"/>
<dbReference type="DMDM" id="74733280"/>
<dbReference type="jPOST" id="Q9BV23"/>
<dbReference type="MassIVE" id="Q9BV23"/>
<dbReference type="PaxDb" id="9606-ENSP00000420315"/>
<dbReference type="PeptideAtlas" id="Q9BV23"/>
<dbReference type="ProteomicsDB" id="79154"/>
<dbReference type="Pumba" id="Q9BV23"/>
<dbReference type="Antibodypedia" id="2562">
    <property type="antibodies" value="123 antibodies from 27 providers"/>
</dbReference>
<dbReference type="DNASU" id="57406"/>
<dbReference type="Ensembl" id="ENST00000295962.8">
    <property type="protein sequence ID" value="ENSP00000295962.4"/>
    <property type="gene ID" value="ENSG00000163686.15"/>
</dbReference>
<dbReference type="Ensembl" id="ENST00000478253.6">
    <property type="protein sequence ID" value="ENSP00000420315.1"/>
    <property type="gene ID" value="ENSG00000163686.15"/>
</dbReference>
<dbReference type="GeneID" id="57406"/>
<dbReference type="KEGG" id="hsa:57406"/>
<dbReference type="MANE-Select" id="ENST00000478253.6">
    <property type="protein sequence ID" value="ENSP00000420315.1"/>
    <property type="RefSeq nucleotide sequence ID" value="NM_001320126.2"/>
    <property type="RefSeq protein sequence ID" value="NP_001307055.1"/>
</dbReference>
<dbReference type="UCSC" id="uc003djs.4">
    <property type="organism name" value="human"/>
</dbReference>
<dbReference type="AGR" id="HGNC:21398"/>
<dbReference type="CTD" id="57406"/>
<dbReference type="DisGeNET" id="57406"/>
<dbReference type="GeneCards" id="ABHD6"/>
<dbReference type="HGNC" id="HGNC:21398">
    <property type="gene designation" value="ABHD6"/>
</dbReference>
<dbReference type="HPA" id="ENSG00000163686">
    <property type="expression patterns" value="Tissue enhanced (liver)"/>
</dbReference>
<dbReference type="neXtProt" id="NX_Q9BV23"/>
<dbReference type="OpenTargets" id="ENSG00000163686"/>
<dbReference type="PharmGKB" id="PA134916787"/>
<dbReference type="VEuPathDB" id="HostDB:ENSG00000163686"/>
<dbReference type="eggNOG" id="KOG1454">
    <property type="taxonomic scope" value="Eukaryota"/>
</dbReference>
<dbReference type="GeneTree" id="ENSGT00510000047225"/>
<dbReference type="InParanoid" id="Q9BV23"/>
<dbReference type="OMA" id="NAMWQYS"/>
<dbReference type="OrthoDB" id="6431331at2759"/>
<dbReference type="PAN-GO" id="Q9BV23">
    <property type="GO annotations" value="3 GO annotations based on evolutionary models"/>
</dbReference>
<dbReference type="PhylomeDB" id="Q9BV23"/>
<dbReference type="TreeFam" id="TF331946"/>
<dbReference type="PathwayCommons" id="Q9BV23"/>
<dbReference type="Reactome" id="R-HSA-426048">
    <property type="pathway name" value="Arachidonate production from DAG"/>
</dbReference>
<dbReference type="SignaLink" id="Q9BV23"/>
<dbReference type="BioGRID-ORCS" id="57406">
    <property type="hits" value="16 hits in 1158 CRISPR screens"/>
</dbReference>
<dbReference type="ChiTaRS" id="ABHD6">
    <property type="organism name" value="human"/>
</dbReference>
<dbReference type="GenomeRNAi" id="57406"/>
<dbReference type="Pharos" id="Q9BV23">
    <property type="development level" value="Tchem"/>
</dbReference>
<dbReference type="PRO" id="PR:Q9BV23"/>
<dbReference type="Proteomes" id="UP000005640">
    <property type="component" value="Chromosome 3"/>
</dbReference>
<dbReference type="RNAct" id="Q9BV23">
    <property type="molecule type" value="protein"/>
</dbReference>
<dbReference type="Bgee" id="ENSG00000163686">
    <property type="expression patterns" value="Expressed in ileal mucosa and 178 other cell types or tissues"/>
</dbReference>
<dbReference type="ExpressionAtlas" id="Q9BV23">
    <property type="expression patterns" value="baseline and differential"/>
</dbReference>
<dbReference type="GO" id="GO:0032281">
    <property type="term" value="C:AMPA glutamate receptor complex"/>
    <property type="evidence" value="ECO:0000318"/>
    <property type="project" value="GO_Central"/>
</dbReference>
<dbReference type="GO" id="GO:0098982">
    <property type="term" value="C:GABA-ergic synapse"/>
    <property type="evidence" value="ECO:0007669"/>
    <property type="project" value="Ensembl"/>
</dbReference>
<dbReference type="GO" id="GO:0098978">
    <property type="term" value="C:glutamatergic synapse"/>
    <property type="evidence" value="ECO:0007669"/>
    <property type="project" value="Ensembl"/>
</dbReference>
<dbReference type="GO" id="GO:0031902">
    <property type="term" value="C:late endosome membrane"/>
    <property type="evidence" value="ECO:0000250"/>
    <property type="project" value="UniProtKB"/>
</dbReference>
<dbReference type="GO" id="GO:0005765">
    <property type="term" value="C:lysosomal membrane"/>
    <property type="evidence" value="ECO:0000250"/>
    <property type="project" value="UniProtKB"/>
</dbReference>
<dbReference type="GO" id="GO:0016020">
    <property type="term" value="C:membrane"/>
    <property type="evidence" value="ECO:0000250"/>
    <property type="project" value="UniProtKB"/>
</dbReference>
<dbReference type="GO" id="GO:0031966">
    <property type="term" value="C:mitochondrial membrane"/>
    <property type="evidence" value="ECO:0007669"/>
    <property type="project" value="UniProtKB-SubCell"/>
</dbReference>
<dbReference type="GO" id="GO:0005886">
    <property type="term" value="C:plasma membrane"/>
    <property type="evidence" value="ECO:0000304"/>
    <property type="project" value="Reactome"/>
</dbReference>
<dbReference type="GO" id="GO:0045211">
    <property type="term" value="C:postsynaptic membrane"/>
    <property type="evidence" value="ECO:0007669"/>
    <property type="project" value="Ensembl"/>
</dbReference>
<dbReference type="GO" id="GO:0047372">
    <property type="term" value="F:monoacylglycerol lipase activity"/>
    <property type="evidence" value="ECO:0000314"/>
    <property type="project" value="UniProtKB"/>
</dbReference>
<dbReference type="GO" id="GO:0004620">
    <property type="term" value="F:phospholipase activity"/>
    <property type="evidence" value="ECO:0007669"/>
    <property type="project" value="Ensembl"/>
</dbReference>
<dbReference type="GO" id="GO:0046464">
    <property type="term" value="P:acylglycerol catabolic process"/>
    <property type="evidence" value="ECO:0000314"/>
    <property type="project" value="UniProtKB"/>
</dbReference>
<dbReference type="GO" id="GO:0019369">
    <property type="term" value="P:arachidonate metabolic process"/>
    <property type="evidence" value="ECO:0000304"/>
    <property type="project" value="Reactome"/>
</dbReference>
<dbReference type="GO" id="GO:0060292">
    <property type="term" value="P:long-term synaptic depression"/>
    <property type="evidence" value="ECO:0007669"/>
    <property type="project" value="Ensembl"/>
</dbReference>
<dbReference type="GO" id="GO:2001311">
    <property type="term" value="P:lysobisphosphatidic acid metabolic process"/>
    <property type="evidence" value="ECO:0000250"/>
    <property type="project" value="UniProtKB"/>
</dbReference>
<dbReference type="GO" id="GO:0052651">
    <property type="term" value="P:monoacylglycerol catabolic process"/>
    <property type="evidence" value="ECO:0000250"/>
    <property type="project" value="UniProtKB"/>
</dbReference>
<dbReference type="GO" id="GO:0030336">
    <property type="term" value="P:negative regulation of cell migration"/>
    <property type="evidence" value="ECO:0007669"/>
    <property type="project" value="Ensembl"/>
</dbReference>
<dbReference type="GO" id="GO:0120163">
    <property type="term" value="P:negative regulation of cold-induced thermogenesis"/>
    <property type="evidence" value="ECO:0000250"/>
    <property type="project" value="YuBioLab"/>
</dbReference>
<dbReference type="GO" id="GO:0009395">
    <property type="term" value="P:phospholipid catabolic process"/>
    <property type="evidence" value="ECO:0007669"/>
    <property type="project" value="Ensembl"/>
</dbReference>
<dbReference type="GO" id="GO:0046889">
    <property type="term" value="P:positive regulation of lipid biosynthetic process"/>
    <property type="evidence" value="ECO:0007669"/>
    <property type="project" value="Ensembl"/>
</dbReference>
<dbReference type="GO" id="GO:2000124">
    <property type="term" value="P:regulation of endocannabinoid signaling pathway"/>
    <property type="evidence" value="ECO:0007669"/>
    <property type="project" value="Ensembl"/>
</dbReference>
<dbReference type="GO" id="GO:0099178">
    <property type="term" value="P:regulation of retrograde trans-synaptic signaling by endocanabinoid"/>
    <property type="evidence" value="ECO:0007669"/>
    <property type="project" value="Ensembl"/>
</dbReference>
<dbReference type="FunFam" id="3.40.50.1820:FF:000082">
    <property type="entry name" value="monoacylglycerol lipase ABHD6"/>
    <property type="match status" value="1"/>
</dbReference>
<dbReference type="Gene3D" id="3.40.50.1820">
    <property type="entry name" value="alpha/beta hydrolase"/>
    <property type="match status" value="1"/>
</dbReference>
<dbReference type="InterPro" id="IPR000073">
    <property type="entry name" value="AB_hydrolase_1"/>
</dbReference>
<dbReference type="InterPro" id="IPR029058">
    <property type="entry name" value="AB_hydrolase_fold"/>
</dbReference>
<dbReference type="InterPro" id="IPR050266">
    <property type="entry name" value="AB_hydrolase_sf"/>
</dbReference>
<dbReference type="InterPro" id="IPR000639">
    <property type="entry name" value="Epox_hydrolase-like"/>
</dbReference>
<dbReference type="PANTHER" id="PTHR43798">
    <property type="entry name" value="MONOACYLGLYCEROL LIPASE"/>
    <property type="match status" value="1"/>
</dbReference>
<dbReference type="PANTHER" id="PTHR43798:SF5">
    <property type="entry name" value="MONOACYLGLYCEROL LIPASE ABHD6"/>
    <property type="match status" value="1"/>
</dbReference>
<dbReference type="Pfam" id="PF00561">
    <property type="entry name" value="Abhydrolase_1"/>
    <property type="match status" value="1"/>
</dbReference>
<dbReference type="PRINTS" id="PR00111">
    <property type="entry name" value="ABHYDROLASE"/>
</dbReference>
<dbReference type="PRINTS" id="PR00412">
    <property type="entry name" value="EPOXHYDRLASE"/>
</dbReference>
<dbReference type="SUPFAM" id="SSF53474">
    <property type="entry name" value="alpha/beta-Hydrolases"/>
    <property type="match status" value="1"/>
</dbReference>
<sequence length="337" mass="38331">MDLDVVNMFVIAGGTLAIPILAFVASFLLWPSALIRIYYWYWRRTLGMQVRYVHHEDYQFCYSFRGRPGHKPSILMLHGFSAHKDMWLSVVKFLPKNLHLVCVDMPGHEGTTRSSLDDLSIDGQVKRIHQFVECLKLNKKPFHLVGTSMGGQVAGVYAAYYPSDVSSLCLVCPAGLQYSTDNQFVQRLKELQGSAAVEKIPLIPSTPEEMSEMLQLCSYVRFKVPQQILQGLVDVRIPHNNFYRKLFLEIVSEKSRYSLHQNMDKIKVPTQIIWGKQDQVLDVSGADMLAKSIANCQVELLENCGHSVVMERPRKTAKLIIDFLASVHNTDNNKKLD</sequence>
<accession>Q9BV23</accession>
<accession>B2R7Y9</accession>
<accession>Q6ZMF7</accession>
<feature type="chain" id="PRO_0000281575" description="Monoacylglycerol lipase ABHD6">
    <location>
        <begin position="1"/>
        <end position="337"/>
    </location>
</feature>
<feature type="topological domain" description="Extracellular" evidence="3">
    <location>
        <begin position="1"/>
        <end position="8"/>
    </location>
</feature>
<feature type="transmembrane region" description="Helical; Signal-anchor for type II membrane protein" evidence="3">
    <location>
        <begin position="9"/>
        <end position="29"/>
    </location>
</feature>
<feature type="topological domain" description="Cytoplasmic" evidence="3">
    <location>
        <begin position="30"/>
        <end position="337"/>
    </location>
</feature>
<feature type="domain" description="AB hydrolase-1" evidence="3">
    <location>
        <begin position="72"/>
        <end position="313"/>
    </location>
</feature>
<feature type="active site" description="Nucleophile" evidence="2 8">
    <location>
        <position position="148"/>
    </location>
</feature>
<feature type="active site" description="Charge relay system" evidence="2">
    <location>
        <position position="278"/>
    </location>
</feature>
<feature type="active site" description="Charge relay system" evidence="2">
    <location>
        <position position="306"/>
    </location>
</feature>
<feature type="binding site" evidence="6 10">
    <location>
        <position position="80"/>
    </location>
    <ligand>
        <name>(9Z)-octadecenoate</name>
        <dbReference type="ChEBI" id="CHEBI:30823"/>
    </ligand>
</feature>
<feature type="binding site" evidence="6 10">
    <location>
        <position position="149"/>
    </location>
    <ligand>
        <name>(9Z)-octadecenoate</name>
        <dbReference type="ChEBI" id="CHEBI:30823"/>
    </ligand>
</feature>
<feature type="binding site" evidence="6 10">
    <location>
        <position position="306"/>
    </location>
    <ligand>
        <name>(9Z)-octadecenoate</name>
        <dbReference type="ChEBI" id="CHEBI:30823"/>
    </ligand>
</feature>
<feature type="sequence variant" id="VAR_081595" description="Decreased bis(monoacylglycero)phosphate (BMP) hydrolase activity; dbSNP:rs200333190." evidence="5">
    <original>R</original>
    <variation>H</variation>
    <location>
        <position position="113"/>
    </location>
</feature>
<feature type="sequence variant" id="VAR_081596" description="Loss of bis(monoacylglycero)phosphate (BMP) hydrolase activity; dbSNP:rs11544004." evidence="5">
    <original>S</original>
    <variation>C</variation>
    <location>
        <position position="148"/>
    </location>
</feature>
<feature type="sequence variant" id="VAR_081597" description="Loss of bis(monoacylglycero)phosphate (BMP) hydrolase activity; dbSNP:rs199678322." evidence="5">
    <original>P</original>
    <variation>L</variation>
    <location>
        <position position="204"/>
    </location>
</feature>
<feature type="sequence variant" id="VAR_081598" description="Loss of lipase activity; dbSNP:rs199696239." evidence="5">
    <original>T</original>
    <variation>P</variation>
    <location>
        <position position="206"/>
    </location>
</feature>
<feature type="sequence variant" id="VAR_081599" description="Decreased bis(monoacylglycero)phosphate (BMP) hydrolase activity; dbSNP:rs745824058." evidence="5">
    <original>G</original>
    <variation>V</variation>
    <location>
        <position position="231"/>
    </location>
</feature>
<feature type="mutagenesis site" description="Loss of 2-arachidonoyglycerol hydrolase activity." evidence="4">
    <original>S</original>
    <variation>A</variation>
    <location>
        <position position="148"/>
    </location>
</feature>
<feature type="sequence conflict" description="In Ref. 1; BAD18771." evidence="7" ref="1">
    <original>I</original>
    <variation>T</variation>
    <location>
        <position position="11"/>
    </location>
</feature>
<feature type="sequence conflict" description="In Ref. 1; BAD18771." evidence="7" ref="1">
    <original>L</original>
    <variation>P</variation>
    <location>
        <position position="135"/>
    </location>
</feature>
<feature type="strand" evidence="11">
    <location>
        <begin position="49"/>
        <end position="55"/>
    </location>
</feature>
<feature type="strand" evidence="11">
    <location>
        <begin position="58"/>
        <end position="66"/>
    </location>
</feature>
<feature type="strand" evidence="11">
    <location>
        <begin position="74"/>
        <end position="77"/>
    </location>
</feature>
<feature type="helix" evidence="11">
    <location>
        <begin position="84"/>
        <end position="87"/>
    </location>
</feature>
<feature type="helix" evidence="11">
    <location>
        <begin position="88"/>
        <end position="91"/>
    </location>
</feature>
<feature type="strand" evidence="11">
    <location>
        <begin position="100"/>
        <end position="103"/>
    </location>
</feature>
<feature type="helix" evidence="11">
    <location>
        <begin position="121"/>
        <end position="135"/>
    </location>
</feature>
<feature type="helix" evidence="11">
    <location>
        <begin position="137"/>
        <end position="139"/>
    </location>
</feature>
<feature type="strand" evidence="11">
    <location>
        <begin position="142"/>
        <end position="147"/>
    </location>
</feature>
<feature type="helix" evidence="11">
    <location>
        <begin position="149"/>
        <end position="160"/>
    </location>
</feature>
<feature type="helix" evidence="11">
    <location>
        <begin position="162"/>
        <end position="164"/>
    </location>
</feature>
<feature type="strand" evidence="11">
    <location>
        <begin position="165"/>
        <end position="172"/>
    </location>
</feature>
<feature type="helix" evidence="11">
    <location>
        <begin position="183"/>
        <end position="192"/>
    </location>
</feature>
<feature type="turn" evidence="11">
    <location>
        <begin position="193"/>
        <end position="195"/>
    </location>
</feature>
<feature type="helix" evidence="11">
    <location>
        <begin position="197"/>
        <end position="199"/>
    </location>
</feature>
<feature type="helix" evidence="11">
    <location>
        <begin position="207"/>
        <end position="217"/>
    </location>
</feature>
<feature type="helix" evidence="11">
    <location>
        <begin position="226"/>
        <end position="234"/>
    </location>
</feature>
<feature type="helix" evidence="11">
    <location>
        <begin position="237"/>
        <end position="239"/>
    </location>
</feature>
<feature type="helix" evidence="11">
    <location>
        <begin position="240"/>
        <end position="250"/>
    </location>
</feature>
<feature type="turn" evidence="11">
    <location>
        <begin position="253"/>
        <end position="257"/>
    </location>
</feature>
<feature type="helix" evidence="11">
    <location>
        <begin position="258"/>
        <end position="262"/>
    </location>
</feature>
<feature type="helix" evidence="11">
    <location>
        <begin position="263"/>
        <end position="265"/>
    </location>
</feature>
<feature type="strand" evidence="11">
    <location>
        <begin position="270"/>
        <end position="275"/>
    </location>
</feature>
<feature type="strand" evidence="11">
    <location>
        <begin position="279"/>
        <end position="281"/>
    </location>
</feature>
<feature type="helix" evidence="11">
    <location>
        <begin position="285"/>
        <end position="292"/>
    </location>
</feature>
<feature type="strand" evidence="11">
    <location>
        <begin position="293"/>
        <end position="303"/>
    </location>
</feature>
<feature type="helix" evidence="11">
    <location>
        <begin position="308"/>
        <end position="311"/>
    </location>
</feature>
<feature type="helix" evidence="11">
    <location>
        <begin position="313"/>
        <end position="334"/>
    </location>
</feature>
<organism>
    <name type="scientific">Homo sapiens</name>
    <name type="common">Human</name>
    <dbReference type="NCBI Taxonomy" id="9606"/>
    <lineage>
        <taxon>Eukaryota</taxon>
        <taxon>Metazoa</taxon>
        <taxon>Chordata</taxon>
        <taxon>Craniata</taxon>
        <taxon>Vertebrata</taxon>
        <taxon>Euteleostomi</taxon>
        <taxon>Mammalia</taxon>
        <taxon>Eutheria</taxon>
        <taxon>Euarchontoglires</taxon>
        <taxon>Primates</taxon>
        <taxon>Haplorrhini</taxon>
        <taxon>Catarrhini</taxon>
        <taxon>Hominidae</taxon>
        <taxon>Homo</taxon>
    </lineage>
</organism>
<evidence type="ECO:0000250" key="1">
    <source>
        <dbReference type="UniProtKB" id="Q8R2Y0"/>
    </source>
</evidence>
<evidence type="ECO:0000250" key="2">
    <source>
        <dbReference type="UniProtKB" id="Q99685"/>
    </source>
</evidence>
<evidence type="ECO:0000255" key="3"/>
<evidence type="ECO:0000269" key="4">
    <source>
    </source>
</evidence>
<evidence type="ECO:0000269" key="5">
    <source>
    </source>
</evidence>
<evidence type="ECO:0000269" key="6">
    <source ref="6"/>
</evidence>
<evidence type="ECO:0000305" key="7"/>
<evidence type="ECO:0000305" key="8">
    <source>
    </source>
</evidence>
<evidence type="ECO:0000312" key="9">
    <source>
        <dbReference type="HGNC" id="HGNC:21398"/>
    </source>
</evidence>
<evidence type="ECO:0007744" key="10">
    <source>
        <dbReference type="PDB" id="7OTS"/>
    </source>
</evidence>
<evidence type="ECO:0007829" key="11">
    <source>
        <dbReference type="PDB" id="7OTS"/>
    </source>
</evidence>
<gene>
    <name evidence="9" type="primary">ABHD6</name>
</gene>
<comment type="function">
    <text evidence="1 4 5">Lipase that preferentially hydrolysis medium-chain saturated monoacylglycerols including 2-arachidonoylglycerol (PubMed:22969151). Through 2-arachidonoylglycerol degradation may regulate endocannabinoid signaling pathways (By similarity). Also has a lysophosphatidyl lipase activity with a preference for lysophosphatidylglycerol among other lysophospholipids (By similarity). Also able to degrade bis(monoacylglycero)phosphate (BMP) and constitutes the major enzyme for BMP catabolism (PubMed:26491015). BMP, also known as lysobisphosphatidic acid, is enriched in late endosomes and lysosomes and plays a key role in the formation of intraluminal vesicles and in lipid sorting (PubMed:26491015).</text>
</comment>
<comment type="catalytic activity">
    <reaction evidence="4">
        <text>Hydrolyzes glycerol monoesters of long-chain fatty acids.</text>
        <dbReference type="EC" id="3.1.1.23"/>
    </reaction>
</comment>
<comment type="catalytic activity">
    <reaction evidence="4">
        <text>1-octanoylglycerol + H2O = octanoate + glycerol + H(+)</text>
        <dbReference type="Rhea" id="RHEA:44328"/>
        <dbReference type="ChEBI" id="CHEBI:15377"/>
        <dbReference type="ChEBI" id="CHEBI:15378"/>
        <dbReference type="ChEBI" id="CHEBI:17754"/>
        <dbReference type="ChEBI" id="CHEBI:25646"/>
        <dbReference type="ChEBI" id="CHEBI:85241"/>
    </reaction>
    <physiologicalReaction direction="left-to-right" evidence="4">
        <dbReference type="Rhea" id="RHEA:44329"/>
    </physiologicalReaction>
</comment>
<comment type="catalytic activity">
    <reaction evidence="4">
        <text>1-decanoylglycerol + H2O = decanoate + glycerol + H(+)</text>
        <dbReference type="Rhea" id="RHEA:44320"/>
        <dbReference type="ChEBI" id="CHEBI:15377"/>
        <dbReference type="ChEBI" id="CHEBI:15378"/>
        <dbReference type="ChEBI" id="CHEBI:17754"/>
        <dbReference type="ChEBI" id="CHEBI:27689"/>
        <dbReference type="ChEBI" id="CHEBI:75547"/>
    </reaction>
    <physiologicalReaction direction="left-to-right" evidence="4">
        <dbReference type="Rhea" id="RHEA:44321"/>
    </physiologicalReaction>
</comment>
<comment type="catalytic activity">
    <reaction evidence="4">
        <text>1-dodecanoylglycerol + H2O = dodecanoate + glycerol + H(+)</text>
        <dbReference type="Rhea" id="RHEA:44316"/>
        <dbReference type="ChEBI" id="CHEBI:15377"/>
        <dbReference type="ChEBI" id="CHEBI:15378"/>
        <dbReference type="ChEBI" id="CHEBI:17754"/>
        <dbReference type="ChEBI" id="CHEBI:18262"/>
        <dbReference type="ChEBI" id="CHEBI:75539"/>
    </reaction>
</comment>
<comment type="catalytic activity">
    <reaction evidence="4">
        <text>1-tetradecanoylglycerol + H2O = tetradecanoate + glycerol + H(+)</text>
        <dbReference type="Rhea" id="RHEA:44312"/>
        <dbReference type="ChEBI" id="CHEBI:15377"/>
        <dbReference type="ChEBI" id="CHEBI:15378"/>
        <dbReference type="ChEBI" id="CHEBI:17754"/>
        <dbReference type="ChEBI" id="CHEBI:30807"/>
        <dbReference type="ChEBI" id="CHEBI:75562"/>
    </reaction>
    <physiologicalReaction direction="left-to-right" evidence="4">
        <dbReference type="Rhea" id="RHEA:44313"/>
    </physiologicalReaction>
</comment>
<comment type="catalytic activity">
    <reaction evidence="4">
        <text>2-hexadecanoylglycerol + H2O = glycerol + hexadecanoate + H(+)</text>
        <dbReference type="Rhea" id="RHEA:39963"/>
        <dbReference type="ChEBI" id="CHEBI:7896"/>
        <dbReference type="ChEBI" id="CHEBI:15377"/>
        <dbReference type="ChEBI" id="CHEBI:15378"/>
        <dbReference type="ChEBI" id="CHEBI:17754"/>
        <dbReference type="ChEBI" id="CHEBI:75455"/>
    </reaction>
    <physiologicalReaction direction="left-to-right" evidence="4">
        <dbReference type="Rhea" id="RHEA:39964"/>
    </physiologicalReaction>
</comment>
<comment type="catalytic activity">
    <reaction evidence="4">
        <text>2-(9Z-octadecenoyl)-glycerol + H2O = glycerol + (9Z)-octadecenoate + H(+)</text>
        <dbReference type="Rhea" id="RHEA:38491"/>
        <dbReference type="ChEBI" id="CHEBI:15377"/>
        <dbReference type="ChEBI" id="CHEBI:15378"/>
        <dbReference type="ChEBI" id="CHEBI:17754"/>
        <dbReference type="ChEBI" id="CHEBI:30823"/>
        <dbReference type="ChEBI" id="CHEBI:73990"/>
    </reaction>
    <physiologicalReaction direction="left-to-right" evidence="4">
        <dbReference type="Rhea" id="RHEA:38492"/>
    </physiologicalReaction>
</comment>
<comment type="catalytic activity">
    <reaction evidence="4">
        <text>1-(9Z-octadecenoyl)-glycerol + H2O = glycerol + (9Z)-octadecenoate + H(+)</text>
        <dbReference type="Rhea" id="RHEA:38487"/>
        <dbReference type="ChEBI" id="CHEBI:15377"/>
        <dbReference type="ChEBI" id="CHEBI:15378"/>
        <dbReference type="ChEBI" id="CHEBI:17754"/>
        <dbReference type="ChEBI" id="CHEBI:30823"/>
        <dbReference type="ChEBI" id="CHEBI:75342"/>
    </reaction>
    <physiologicalReaction direction="left-to-right" evidence="4">
        <dbReference type="Rhea" id="RHEA:38488"/>
    </physiologicalReaction>
</comment>
<comment type="catalytic activity">
    <reaction evidence="4">
        <text>2-(9Z,12Z-octadecadienoyl)-glycerol + H2O = (9Z,12Z)-octadecadienoate + glycerol + H(+)</text>
        <dbReference type="Rhea" id="RHEA:44732"/>
        <dbReference type="ChEBI" id="CHEBI:15377"/>
        <dbReference type="ChEBI" id="CHEBI:15378"/>
        <dbReference type="ChEBI" id="CHEBI:17754"/>
        <dbReference type="ChEBI" id="CHEBI:30245"/>
        <dbReference type="ChEBI" id="CHEBI:75457"/>
    </reaction>
    <physiologicalReaction direction="left-to-right" evidence="4">
        <dbReference type="Rhea" id="RHEA:44733"/>
    </physiologicalReaction>
</comment>
<comment type="catalytic activity">
    <reaction evidence="4">
        <text>2-(5Z,8Z,11Z,14Z-eicosatetraenoyl)-glycerol + H2O = glycerol + (5Z,8Z,11Z,14Z)-eicosatetraenoate + H(+)</text>
        <dbReference type="Rhea" id="RHEA:26132"/>
        <dbReference type="ChEBI" id="CHEBI:15377"/>
        <dbReference type="ChEBI" id="CHEBI:15378"/>
        <dbReference type="ChEBI" id="CHEBI:17754"/>
        <dbReference type="ChEBI" id="CHEBI:32395"/>
        <dbReference type="ChEBI" id="CHEBI:52392"/>
    </reaction>
    <physiologicalReaction direction="left-to-right" evidence="4">
        <dbReference type="Rhea" id="RHEA:26133"/>
    </physiologicalReaction>
</comment>
<comment type="catalytic activity">
    <reaction evidence="4">
        <text>1-(5Z,8Z,11Z,14Z-eicosatetraenoyl)-glycerol + H2O = glycerol + (5Z,8Z,11Z,14Z)-eicosatetraenoate + H(+)</text>
        <dbReference type="Rhea" id="RHEA:44728"/>
        <dbReference type="ChEBI" id="CHEBI:15377"/>
        <dbReference type="ChEBI" id="CHEBI:15378"/>
        <dbReference type="ChEBI" id="CHEBI:17754"/>
        <dbReference type="ChEBI" id="CHEBI:32395"/>
        <dbReference type="ChEBI" id="CHEBI:75612"/>
    </reaction>
    <physiologicalReaction direction="left-to-right" evidence="4">
        <dbReference type="Rhea" id="RHEA:44729"/>
    </physiologicalReaction>
</comment>
<comment type="catalytic activity">
    <reaction evidence="4">
        <text>1-(9Z,12Z-octadecadienoyl)-glycerol + H2O = (9Z,12Z)-octadecadienoate + glycerol + H(+)</text>
        <dbReference type="Rhea" id="RHEA:48428"/>
        <dbReference type="ChEBI" id="CHEBI:15377"/>
        <dbReference type="ChEBI" id="CHEBI:15378"/>
        <dbReference type="ChEBI" id="CHEBI:17754"/>
        <dbReference type="ChEBI" id="CHEBI:30245"/>
        <dbReference type="ChEBI" id="CHEBI:75568"/>
    </reaction>
    <physiologicalReaction direction="left-to-right" evidence="4">
        <dbReference type="Rhea" id="RHEA:48429"/>
    </physiologicalReaction>
</comment>
<comment type="catalytic activity">
    <reaction evidence="5">
        <text>3-(9Z-octadecenoyl)-sn-glycero-1-phospho-(3'-(9Z-octadecenoyl)-1'-sn-glycerol) + H2O = 3-(9Z-octadecenoyl)-sn-glycero-1-phospho-(1'-sn-glycerol) + (9Z)-octadecenoate + H(+)</text>
        <dbReference type="Rhea" id="RHEA:55712"/>
        <dbReference type="ChEBI" id="CHEBI:15377"/>
        <dbReference type="ChEBI" id="CHEBI:15378"/>
        <dbReference type="ChEBI" id="CHEBI:30823"/>
        <dbReference type="ChEBI" id="CHEBI:139150"/>
        <dbReference type="ChEBI" id="CHEBI:139152"/>
    </reaction>
    <physiologicalReaction direction="left-to-right" evidence="5">
        <dbReference type="Rhea" id="RHEA:55713"/>
    </physiologicalReaction>
</comment>
<comment type="catalytic activity">
    <reaction evidence="1">
        <text>(S,S)-2-(9Z-octadecenoyl)-sn-glycero-1-phospho-(2'-(9Z-octadecenoyl)-1'-sn-glycerol) + H2O = (S,S)-2-(9Z-octadecenoyl)-sn-glycero-1-phospho-(1'-sn-glycerol) + (9Z)-octadecenoate + H(+)</text>
        <dbReference type="Rhea" id="RHEA:55716"/>
        <dbReference type="ChEBI" id="CHEBI:15377"/>
        <dbReference type="ChEBI" id="CHEBI:15378"/>
        <dbReference type="ChEBI" id="CHEBI:30823"/>
        <dbReference type="ChEBI" id="CHEBI:139156"/>
        <dbReference type="ChEBI" id="CHEBI:139157"/>
    </reaction>
</comment>
<comment type="catalytic activity">
    <reaction evidence="1">
        <text>(R,R)-2-(9Z-octadecenoyl)-sn-glycero-3-phospho-(2'-(9Z-octadecenoyl)-3'-sn-glycerol) + H2O = (R,R)-2-(9Z-octadecenoyl)-sn-glycero-3-phospho-(3'-sn-glycerol) + (9Z)-octadecenoate + H(+)</text>
        <dbReference type="Rhea" id="RHEA:55804"/>
        <dbReference type="ChEBI" id="CHEBI:15377"/>
        <dbReference type="ChEBI" id="CHEBI:15378"/>
        <dbReference type="ChEBI" id="CHEBI:30823"/>
        <dbReference type="ChEBI" id="CHEBI:139228"/>
        <dbReference type="ChEBI" id="CHEBI:139230"/>
    </reaction>
</comment>
<comment type="biophysicochemical properties">
    <kinetics>
        <KM evidence="4">159 uM for 2-arachidonoyglycerol</KM>
        <Vmax evidence="4">45.0 nmol/min/mg enzyme toward 2-arachidonoyglycerol</Vmax>
    </kinetics>
    <phDependence>
        <text evidence="4">Optimum pH is 7.2-9 with 2-arachidonoyglycerol as substrate.</text>
    </phDependence>
</comment>
<comment type="interaction">
    <interactant intactId="EBI-3916106">
        <id>Q9BV23</id>
    </interactant>
    <interactant intactId="EBI-3385283">
        <id>Q9Y3D6</id>
        <label>FIS1</label>
    </interactant>
    <organismsDiffer>false</organismsDiffer>
    <experiments>3</experiments>
</comment>
<comment type="interaction">
    <interactant intactId="EBI-3916106">
        <id>Q9BV23</id>
    </interactant>
    <interactant intactId="EBI-10244780">
        <id>Q5QGT7</id>
        <label>RTP2</label>
    </interactant>
    <organismsDiffer>false</organismsDiffer>
    <experiments>3</experiments>
</comment>
<comment type="interaction">
    <interactant intactId="EBI-3916106">
        <id>Q9BV23</id>
    </interactant>
    <interactant intactId="EBI-4403649">
        <id>Q969E2</id>
        <label>SCAMP4</label>
    </interactant>
    <organismsDiffer>false</organismsDiffer>
    <experiments>3</experiments>
</comment>
<comment type="interaction">
    <interactant intactId="EBI-3916106">
        <id>Q9BV23</id>
    </interactant>
    <interactant intactId="EBI-11343401">
        <id>Q9NYZ1</id>
        <label>TVP23B</label>
    </interactant>
    <organismsDiffer>false</organismsDiffer>
    <experiments>3</experiments>
</comment>
<comment type="subcellular location">
    <subcellularLocation>
        <location evidence="1">Late endosome membrane</location>
        <topology evidence="3">Single-pass type II membrane protein</topology>
    </subcellularLocation>
    <subcellularLocation>
        <location evidence="1">Lysosome membrane</location>
        <topology evidence="3">Single-pass type II membrane protein</topology>
    </subcellularLocation>
    <subcellularLocation>
        <location evidence="1">Mitochondrion membrane</location>
        <topology evidence="3">Single-pass type II membrane protein</topology>
    </subcellularLocation>
</comment>
<comment type="similarity">
    <text evidence="7">Belongs to the AB hydrolase superfamily.</text>
</comment>
<reference key="1">
    <citation type="journal article" date="2004" name="Nat. Genet.">
        <title>Complete sequencing and characterization of 21,243 full-length human cDNAs.</title>
        <authorList>
            <person name="Ota T."/>
            <person name="Suzuki Y."/>
            <person name="Nishikawa T."/>
            <person name="Otsuki T."/>
            <person name="Sugiyama T."/>
            <person name="Irie R."/>
            <person name="Wakamatsu A."/>
            <person name="Hayashi K."/>
            <person name="Sato H."/>
            <person name="Nagai K."/>
            <person name="Kimura K."/>
            <person name="Makita H."/>
            <person name="Sekine M."/>
            <person name="Obayashi M."/>
            <person name="Nishi T."/>
            <person name="Shibahara T."/>
            <person name="Tanaka T."/>
            <person name="Ishii S."/>
            <person name="Yamamoto J."/>
            <person name="Saito K."/>
            <person name="Kawai Y."/>
            <person name="Isono Y."/>
            <person name="Nakamura Y."/>
            <person name="Nagahari K."/>
            <person name="Murakami K."/>
            <person name="Yasuda T."/>
            <person name="Iwayanagi T."/>
            <person name="Wagatsuma M."/>
            <person name="Shiratori A."/>
            <person name="Sudo H."/>
            <person name="Hosoiri T."/>
            <person name="Kaku Y."/>
            <person name="Kodaira H."/>
            <person name="Kondo H."/>
            <person name="Sugawara M."/>
            <person name="Takahashi M."/>
            <person name="Kanda K."/>
            <person name="Yokoi T."/>
            <person name="Furuya T."/>
            <person name="Kikkawa E."/>
            <person name="Omura Y."/>
            <person name="Abe K."/>
            <person name="Kamihara K."/>
            <person name="Katsuta N."/>
            <person name="Sato K."/>
            <person name="Tanikawa M."/>
            <person name="Yamazaki M."/>
            <person name="Ninomiya K."/>
            <person name="Ishibashi T."/>
            <person name="Yamashita H."/>
            <person name="Murakawa K."/>
            <person name="Fujimori K."/>
            <person name="Tanai H."/>
            <person name="Kimata M."/>
            <person name="Watanabe M."/>
            <person name="Hiraoka S."/>
            <person name="Chiba Y."/>
            <person name="Ishida S."/>
            <person name="Ono Y."/>
            <person name="Takiguchi S."/>
            <person name="Watanabe S."/>
            <person name="Yosida M."/>
            <person name="Hotuta T."/>
            <person name="Kusano J."/>
            <person name="Kanehori K."/>
            <person name="Takahashi-Fujii A."/>
            <person name="Hara H."/>
            <person name="Tanase T.-O."/>
            <person name="Nomura Y."/>
            <person name="Togiya S."/>
            <person name="Komai F."/>
            <person name="Hara R."/>
            <person name="Takeuchi K."/>
            <person name="Arita M."/>
            <person name="Imose N."/>
            <person name="Musashino K."/>
            <person name="Yuuki H."/>
            <person name="Oshima A."/>
            <person name="Sasaki N."/>
            <person name="Aotsuka S."/>
            <person name="Yoshikawa Y."/>
            <person name="Matsunawa H."/>
            <person name="Ichihara T."/>
            <person name="Shiohata N."/>
            <person name="Sano S."/>
            <person name="Moriya S."/>
            <person name="Momiyama H."/>
            <person name="Satoh N."/>
            <person name="Takami S."/>
            <person name="Terashima Y."/>
            <person name="Suzuki O."/>
            <person name="Nakagawa S."/>
            <person name="Senoh A."/>
            <person name="Mizoguchi H."/>
            <person name="Goto Y."/>
            <person name="Shimizu F."/>
            <person name="Wakebe H."/>
            <person name="Hishigaki H."/>
            <person name="Watanabe T."/>
            <person name="Sugiyama A."/>
            <person name="Takemoto M."/>
            <person name="Kawakami B."/>
            <person name="Yamazaki M."/>
            <person name="Watanabe K."/>
            <person name="Kumagai A."/>
            <person name="Itakura S."/>
            <person name="Fukuzumi Y."/>
            <person name="Fujimori Y."/>
            <person name="Komiyama M."/>
            <person name="Tashiro H."/>
            <person name="Tanigami A."/>
            <person name="Fujiwara T."/>
            <person name="Ono T."/>
            <person name="Yamada K."/>
            <person name="Fujii Y."/>
            <person name="Ozaki K."/>
            <person name="Hirao M."/>
            <person name="Ohmori Y."/>
            <person name="Kawabata A."/>
            <person name="Hikiji T."/>
            <person name="Kobatake N."/>
            <person name="Inagaki H."/>
            <person name="Ikema Y."/>
            <person name="Okamoto S."/>
            <person name="Okitani R."/>
            <person name="Kawakami T."/>
            <person name="Noguchi S."/>
            <person name="Itoh T."/>
            <person name="Shigeta K."/>
            <person name="Senba T."/>
            <person name="Matsumura K."/>
            <person name="Nakajima Y."/>
            <person name="Mizuno T."/>
            <person name="Morinaga M."/>
            <person name="Sasaki M."/>
            <person name="Togashi T."/>
            <person name="Oyama M."/>
            <person name="Hata H."/>
            <person name="Watanabe M."/>
            <person name="Komatsu T."/>
            <person name="Mizushima-Sugano J."/>
            <person name="Satoh T."/>
            <person name="Shirai Y."/>
            <person name="Takahashi Y."/>
            <person name="Nakagawa K."/>
            <person name="Okumura K."/>
            <person name="Nagase T."/>
            <person name="Nomura N."/>
            <person name="Kikuchi H."/>
            <person name="Masuho Y."/>
            <person name="Yamashita R."/>
            <person name="Nakai K."/>
            <person name="Yada T."/>
            <person name="Nakamura Y."/>
            <person name="Ohara O."/>
            <person name="Isogai T."/>
            <person name="Sugano S."/>
        </authorList>
    </citation>
    <scope>NUCLEOTIDE SEQUENCE [LARGE SCALE MRNA]</scope>
    <source>
        <tissue>Cerebellum</tissue>
        <tissue>Hepatoma</tissue>
        <tissue>Lung</tissue>
    </source>
</reference>
<reference key="2">
    <citation type="journal article" date="2006" name="Nature">
        <title>The DNA sequence, annotation and analysis of human chromosome 3.</title>
        <authorList>
            <person name="Muzny D.M."/>
            <person name="Scherer S.E."/>
            <person name="Kaul R."/>
            <person name="Wang J."/>
            <person name="Yu J."/>
            <person name="Sudbrak R."/>
            <person name="Buhay C.J."/>
            <person name="Chen R."/>
            <person name="Cree A."/>
            <person name="Ding Y."/>
            <person name="Dugan-Rocha S."/>
            <person name="Gill R."/>
            <person name="Gunaratne P."/>
            <person name="Harris R.A."/>
            <person name="Hawes A.C."/>
            <person name="Hernandez J."/>
            <person name="Hodgson A.V."/>
            <person name="Hume J."/>
            <person name="Jackson A."/>
            <person name="Khan Z.M."/>
            <person name="Kovar-Smith C."/>
            <person name="Lewis L.R."/>
            <person name="Lozado R.J."/>
            <person name="Metzker M.L."/>
            <person name="Milosavljevic A."/>
            <person name="Miner G.R."/>
            <person name="Morgan M.B."/>
            <person name="Nazareth L.V."/>
            <person name="Scott G."/>
            <person name="Sodergren E."/>
            <person name="Song X.-Z."/>
            <person name="Steffen D."/>
            <person name="Wei S."/>
            <person name="Wheeler D.A."/>
            <person name="Wright M.W."/>
            <person name="Worley K.C."/>
            <person name="Yuan Y."/>
            <person name="Zhang Z."/>
            <person name="Adams C.Q."/>
            <person name="Ansari-Lari M.A."/>
            <person name="Ayele M."/>
            <person name="Brown M.J."/>
            <person name="Chen G."/>
            <person name="Chen Z."/>
            <person name="Clendenning J."/>
            <person name="Clerc-Blankenburg K.P."/>
            <person name="Chen R."/>
            <person name="Chen Z."/>
            <person name="Davis C."/>
            <person name="Delgado O."/>
            <person name="Dinh H.H."/>
            <person name="Dong W."/>
            <person name="Draper H."/>
            <person name="Ernst S."/>
            <person name="Fu G."/>
            <person name="Gonzalez-Garay M.L."/>
            <person name="Garcia D.K."/>
            <person name="Gillett W."/>
            <person name="Gu J."/>
            <person name="Hao B."/>
            <person name="Haugen E."/>
            <person name="Havlak P."/>
            <person name="He X."/>
            <person name="Hennig S."/>
            <person name="Hu S."/>
            <person name="Huang W."/>
            <person name="Jackson L.R."/>
            <person name="Jacob L.S."/>
            <person name="Kelly S.H."/>
            <person name="Kube M."/>
            <person name="Levy R."/>
            <person name="Li Z."/>
            <person name="Liu B."/>
            <person name="Liu J."/>
            <person name="Liu W."/>
            <person name="Lu J."/>
            <person name="Maheshwari M."/>
            <person name="Nguyen B.-V."/>
            <person name="Okwuonu G.O."/>
            <person name="Palmeiri A."/>
            <person name="Pasternak S."/>
            <person name="Perez L.M."/>
            <person name="Phelps K.A."/>
            <person name="Plopper F.J."/>
            <person name="Qiang B."/>
            <person name="Raymond C."/>
            <person name="Rodriguez R."/>
            <person name="Saenphimmachak C."/>
            <person name="Santibanez J."/>
            <person name="Shen H."/>
            <person name="Shen Y."/>
            <person name="Subramanian S."/>
            <person name="Tabor P.E."/>
            <person name="Verduzco D."/>
            <person name="Waldron L."/>
            <person name="Wang J."/>
            <person name="Wang J."/>
            <person name="Wang Q."/>
            <person name="Williams G.A."/>
            <person name="Wong G.K.-S."/>
            <person name="Yao Z."/>
            <person name="Zhang J."/>
            <person name="Zhang X."/>
            <person name="Zhao G."/>
            <person name="Zhou J."/>
            <person name="Zhou Y."/>
            <person name="Nelson D."/>
            <person name="Lehrach H."/>
            <person name="Reinhardt R."/>
            <person name="Naylor S.L."/>
            <person name="Yang H."/>
            <person name="Olson M."/>
            <person name="Weinstock G."/>
            <person name="Gibbs R.A."/>
        </authorList>
    </citation>
    <scope>NUCLEOTIDE SEQUENCE [LARGE SCALE GENOMIC DNA]</scope>
</reference>
<reference key="3">
    <citation type="submission" date="2005-07" db="EMBL/GenBank/DDBJ databases">
        <authorList>
            <person name="Mural R.J."/>
            <person name="Istrail S."/>
            <person name="Sutton G.G."/>
            <person name="Florea L."/>
            <person name="Halpern A.L."/>
            <person name="Mobarry C.M."/>
            <person name="Lippert R."/>
            <person name="Walenz B."/>
            <person name="Shatkay H."/>
            <person name="Dew I."/>
            <person name="Miller J.R."/>
            <person name="Flanigan M.J."/>
            <person name="Edwards N.J."/>
            <person name="Bolanos R."/>
            <person name="Fasulo D."/>
            <person name="Halldorsson B.V."/>
            <person name="Hannenhalli S."/>
            <person name="Turner R."/>
            <person name="Yooseph S."/>
            <person name="Lu F."/>
            <person name="Nusskern D.R."/>
            <person name="Shue B.C."/>
            <person name="Zheng X.H."/>
            <person name="Zhong F."/>
            <person name="Delcher A.L."/>
            <person name="Huson D.H."/>
            <person name="Kravitz S.A."/>
            <person name="Mouchard L."/>
            <person name="Reinert K."/>
            <person name="Remington K.A."/>
            <person name="Clark A.G."/>
            <person name="Waterman M.S."/>
            <person name="Eichler E.E."/>
            <person name="Adams M.D."/>
            <person name="Hunkapiller M.W."/>
            <person name="Myers E.W."/>
            <person name="Venter J.C."/>
        </authorList>
    </citation>
    <scope>NUCLEOTIDE SEQUENCE [LARGE SCALE GENOMIC DNA]</scope>
</reference>
<reference key="4">
    <citation type="journal article" date="2004" name="Genome Res.">
        <title>The status, quality, and expansion of the NIH full-length cDNA project: the Mammalian Gene Collection (MGC).</title>
        <authorList>
            <consortium name="The MGC Project Team"/>
        </authorList>
    </citation>
    <scope>NUCLEOTIDE SEQUENCE [LARGE SCALE MRNA]</scope>
    <source>
        <tissue>Skin</tissue>
    </source>
</reference>
<reference key="5">
    <citation type="journal article" date="2012" name="J. Lipid Res.">
        <title>Biochemical and pharmacological characterization of human alpha/beta-hydrolase domain containing 6 (ABHD6) and 12 (ABHD12).</title>
        <authorList>
            <person name="Navia-Paldanius D."/>
            <person name="Savinainen J.R."/>
            <person name="Laitinen J.T."/>
        </authorList>
    </citation>
    <scope>CATALYTIC ACTIVITY</scope>
    <scope>BIOPHYSICOCHEMICAL PROPERTIES</scope>
    <scope>MUTAGENESIS OF SER-148</scope>
</reference>
<reference key="6">
    <citation type="submission" date="2021-06" db="PDB data bank">
        <title>Crystal structure of human monoacylglycerol lipase ABHD6 in complex with oleic acid and octyl glucoside.</title>
        <authorList>
            <person name="Nawrotek A."/>
            <person name="Talagas A."/>
            <person name="Vuillard L."/>
            <person name="Miallau L."/>
        </authorList>
    </citation>
    <scope>X-RAY CRYSTALLOGRAPHY (1.79 ANGSTROMS) OF 43-337 IN COMPLEX WITH (9Z)-OCTADECENOATE</scope>
</reference>
<reference key="7">
    <citation type="journal article" date="2015" name="J. Biol. Chem.">
        <title>alpha/beta hydrolase domain-containing 6 (ABHD6) degrades the late endosomal/lysosomal lipid bis(monoacylglycero)phosphate.</title>
        <authorList>
            <person name="Pribasnig M.A."/>
            <person name="Mrak I."/>
            <person name="Grabner G.F."/>
            <person name="Taschler U."/>
            <person name="Knittelfelder O."/>
            <person name="Scherz B."/>
            <person name="Eichmann T.O."/>
            <person name="Heier C."/>
            <person name="Grumet L."/>
            <person name="Kowaliuk J."/>
            <person name="Romauch M."/>
            <person name="Holler S."/>
            <person name="Anderl F."/>
            <person name="Wolinski H."/>
            <person name="Lass A."/>
            <person name="Breinbauer R."/>
            <person name="Marsche G."/>
            <person name="Brown J.M."/>
            <person name="Zimmermann R."/>
        </authorList>
    </citation>
    <scope>FUNCTION</scope>
    <scope>CATALYTIC ACTIVITY</scope>
    <scope>VARIANTS HIS-113; CYS-148; LEU-204; PRO-206 AND VAL-231</scope>
    <scope>CHARACTERIZATION OF VARIANTS HIS-113; CYS-148; LEU-204; PRO-206 AND VAL-231</scope>
</reference>